<sequence length="70" mass="8177">MRANELQELRVNTAQELSAKLNDLKAELFNLRFQLATGQLENPMRIRQVKKSIAQVKTILREKELKVIEQ</sequence>
<evidence type="ECO:0000255" key="1">
    <source>
        <dbReference type="HAMAP-Rule" id="MF_00374"/>
    </source>
</evidence>
<evidence type="ECO:0000305" key="2"/>
<organism>
    <name type="scientific">Clostridium novyi (strain NT)</name>
    <dbReference type="NCBI Taxonomy" id="386415"/>
    <lineage>
        <taxon>Bacteria</taxon>
        <taxon>Bacillati</taxon>
        <taxon>Bacillota</taxon>
        <taxon>Clostridia</taxon>
        <taxon>Eubacteriales</taxon>
        <taxon>Clostridiaceae</taxon>
        <taxon>Clostridium</taxon>
    </lineage>
</organism>
<dbReference type="EMBL" id="CP000382">
    <property type="protein sequence ID" value="ABK61894.1"/>
    <property type="molecule type" value="Genomic_DNA"/>
</dbReference>
<dbReference type="RefSeq" id="WP_003367823.1">
    <property type="nucleotide sequence ID" value="NC_008593.1"/>
</dbReference>
<dbReference type="SMR" id="A0PXV4"/>
<dbReference type="STRING" id="386415.NT01CX_1123"/>
<dbReference type="KEGG" id="cno:NT01CX_1123"/>
<dbReference type="eggNOG" id="COG0255">
    <property type="taxonomic scope" value="Bacteria"/>
</dbReference>
<dbReference type="HOGENOM" id="CLU_158491_5_2_9"/>
<dbReference type="Proteomes" id="UP000008220">
    <property type="component" value="Chromosome"/>
</dbReference>
<dbReference type="GO" id="GO:0022625">
    <property type="term" value="C:cytosolic large ribosomal subunit"/>
    <property type="evidence" value="ECO:0007669"/>
    <property type="project" value="TreeGrafter"/>
</dbReference>
<dbReference type="GO" id="GO:0003735">
    <property type="term" value="F:structural constituent of ribosome"/>
    <property type="evidence" value="ECO:0007669"/>
    <property type="project" value="InterPro"/>
</dbReference>
<dbReference type="GO" id="GO:0006412">
    <property type="term" value="P:translation"/>
    <property type="evidence" value="ECO:0007669"/>
    <property type="project" value="UniProtKB-UniRule"/>
</dbReference>
<dbReference type="CDD" id="cd00427">
    <property type="entry name" value="Ribosomal_L29_HIP"/>
    <property type="match status" value="1"/>
</dbReference>
<dbReference type="FunFam" id="1.10.287.310:FF:000001">
    <property type="entry name" value="50S ribosomal protein L29"/>
    <property type="match status" value="1"/>
</dbReference>
<dbReference type="Gene3D" id="1.10.287.310">
    <property type="match status" value="1"/>
</dbReference>
<dbReference type="HAMAP" id="MF_00374">
    <property type="entry name" value="Ribosomal_uL29"/>
    <property type="match status" value="1"/>
</dbReference>
<dbReference type="InterPro" id="IPR050063">
    <property type="entry name" value="Ribosomal_protein_uL29"/>
</dbReference>
<dbReference type="InterPro" id="IPR001854">
    <property type="entry name" value="Ribosomal_uL29"/>
</dbReference>
<dbReference type="InterPro" id="IPR018254">
    <property type="entry name" value="Ribosomal_uL29_CS"/>
</dbReference>
<dbReference type="InterPro" id="IPR036049">
    <property type="entry name" value="Ribosomal_uL29_sf"/>
</dbReference>
<dbReference type="NCBIfam" id="TIGR00012">
    <property type="entry name" value="L29"/>
    <property type="match status" value="1"/>
</dbReference>
<dbReference type="PANTHER" id="PTHR10916">
    <property type="entry name" value="60S RIBOSOMAL PROTEIN L35/50S RIBOSOMAL PROTEIN L29"/>
    <property type="match status" value="1"/>
</dbReference>
<dbReference type="PANTHER" id="PTHR10916:SF0">
    <property type="entry name" value="LARGE RIBOSOMAL SUBUNIT PROTEIN UL29C"/>
    <property type="match status" value="1"/>
</dbReference>
<dbReference type="Pfam" id="PF00831">
    <property type="entry name" value="Ribosomal_L29"/>
    <property type="match status" value="1"/>
</dbReference>
<dbReference type="SUPFAM" id="SSF46561">
    <property type="entry name" value="Ribosomal protein L29 (L29p)"/>
    <property type="match status" value="1"/>
</dbReference>
<dbReference type="PROSITE" id="PS00579">
    <property type="entry name" value="RIBOSOMAL_L29"/>
    <property type="match status" value="1"/>
</dbReference>
<protein>
    <recommendedName>
        <fullName evidence="1">Large ribosomal subunit protein uL29</fullName>
    </recommendedName>
    <alternativeName>
        <fullName evidence="2">50S ribosomal protein L29</fullName>
    </alternativeName>
</protein>
<keyword id="KW-1185">Reference proteome</keyword>
<keyword id="KW-0687">Ribonucleoprotein</keyword>
<keyword id="KW-0689">Ribosomal protein</keyword>
<feature type="chain" id="PRO_1000007459" description="Large ribosomal subunit protein uL29">
    <location>
        <begin position="1"/>
        <end position="70"/>
    </location>
</feature>
<reference key="1">
    <citation type="journal article" date="2006" name="Nat. Biotechnol.">
        <title>The genome and transcriptomes of the anti-tumor agent Clostridium novyi-NT.</title>
        <authorList>
            <person name="Bettegowda C."/>
            <person name="Huang X."/>
            <person name="Lin J."/>
            <person name="Cheong I."/>
            <person name="Kohli M."/>
            <person name="Szabo S.A."/>
            <person name="Zhang X."/>
            <person name="Diaz L.A. Jr."/>
            <person name="Velculescu V.E."/>
            <person name="Parmigiani G."/>
            <person name="Kinzler K.W."/>
            <person name="Vogelstein B."/>
            <person name="Zhou S."/>
        </authorList>
    </citation>
    <scope>NUCLEOTIDE SEQUENCE [LARGE SCALE GENOMIC DNA]</scope>
    <source>
        <strain>NT</strain>
    </source>
</reference>
<comment type="similarity">
    <text evidence="1">Belongs to the universal ribosomal protein uL29 family.</text>
</comment>
<accession>A0PXV4</accession>
<name>RL29_CLONN</name>
<gene>
    <name evidence="1" type="primary">rpmC</name>
    <name type="ordered locus">NT01CX_1123</name>
</gene>
<proteinExistence type="inferred from homology"/>